<comment type="function">
    <text evidence="1">Produces ATP from ADP in the presence of a proton gradient across the membrane.</text>
</comment>
<comment type="subunit">
    <text evidence="1">F-type ATPases have 2 components, CF(1) - the catalytic core - and CF(0) - the membrane proton channel. CF(1) has five subunits: alpha(3), beta(3), gamma(1), delta(1), epsilon(1). CF(0) has three main subunits: a, b and c.</text>
</comment>
<comment type="subcellular location">
    <subcellularLocation>
        <location evidence="1">Cell membrane</location>
        <topology evidence="1">Peripheral membrane protein</topology>
    </subcellularLocation>
</comment>
<comment type="similarity">
    <text evidence="1">Belongs to the ATPase epsilon chain family.</text>
</comment>
<keyword id="KW-0066">ATP synthesis</keyword>
<keyword id="KW-1003">Cell membrane</keyword>
<keyword id="KW-0139">CF(1)</keyword>
<keyword id="KW-0375">Hydrogen ion transport</keyword>
<keyword id="KW-0406">Ion transport</keyword>
<keyword id="KW-0472">Membrane</keyword>
<keyword id="KW-0813">Transport</keyword>
<feature type="chain" id="PRO_1000056507" description="ATP synthase epsilon chain">
    <location>
        <begin position="1"/>
        <end position="121"/>
    </location>
</feature>
<evidence type="ECO:0000255" key="1">
    <source>
        <dbReference type="HAMAP-Rule" id="MF_00530"/>
    </source>
</evidence>
<name>ATPE_MYCSJ</name>
<protein>
    <recommendedName>
        <fullName evidence="1">ATP synthase epsilon chain</fullName>
    </recommendedName>
    <alternativeName>
        <fullName evidence="1">ATP synthase F1 sector epsilon subunit</fullName>
    </alternativeName>
    <alternativeName>
        <fullName evidence="1">F-ATPase epsilon subunit</fullName>
    </alternativeName>
</protein>
<sequence>MADLDVDIVAVEREIWSGKATFVFTRTTSGEIGILPRHIPLVAQLVDDAMVRVEREGEEDLRVAVGGGFMSVTESGVIILAETAELESEINADEARRDSESDDPATAARGRARLRALGQID</sequence>
<dbReference type="EMBL" id="CP000580">
    <property type="protein sequence ID" value="ABN99637.1"/>
    <property type="molecule type" value="Genomic_DNA"/>
</dbReference>
<dbReference type="SMR" id="A3Q3B0"/>
<dbReference type="KEGG" id="mjl:Mjls_3861"/>
<dbReference type="HOGENOM" id="CLU_084338_4_0_11"/>
<dbReference type="BioCyc" id="MSP164757:G1G8C-3901-MONOMER"/>
<dbReference type="GO" id="GO:0005886">
    <property type="term" value="C:plasma membrane"/>
    <property type="evidence" value="ECO:0007669"/>
    <property type="project" value="UniProtKB-SubCell"/>
</dbReference>
<dbReference type="GO" id="GO:0045259">
    <property type="term" value="C:proton-transporting ATP synthase complex"/>
    <property type="evidence" value="ECO:0007669"/>
    <property type="project" value="UniProtKB-KW"/>
</dbReference>
<dbReference type="GO" id="GO:0005524">
    <property type="term" value="F:ATP binding"/>
    <property type="evidence" value="ECO:0007669"/>
    <property type="project" value="UniProtKB-UniRule"/>
</dbReference>
<dbReference type="GO" id="GO:0046933">
    <property type="term" value="F:proton-transporting ATP synthase activity, rotational mechanism"/>
    <property type="evidence" value="ECO:0007669"/>
    <property type="project" value="UniProtKB-UniRule"/>
</dbReference>
<dbReference type="CDD" id="cd12152">
    <property type="entry name" value="F1-ATPase_delta"/>
    <property type="match status" value="1"/>
</dbReference>
<dbReference type="Gene3D" id="2.60.15.10">
    <property type="entry name" value="F0F1 ATP synthase delta/epsilon subunit, N-terminal"/>
    <property type="match status" value="1"/>
</dbReference>
<dbReference type="HAMAP" id="MF_00530">
    <property type="entry name" value="ATP_synth_epsil_bac"/>
    <property type="match status" value="1"/>
</dbReference>
<dbReference type="InterPro" id="IPR001469">
    <property type="entry name" value="ATP_synth_F1_dsu/esu"/>
</dbReference>
<dbReference type="InterPro" id="IPR020546">
    <property type="entry name" value="ATP_synth_F1_dsu/esu_N"/>
</dbReference>
<dbReference type="InterPro" id="IPR036771">
    <property type="entry name" value="ATPsynth_dsu/esu_N"/>
</dbReference>
<dbReference type="NCBIfam" id="TIGR01216">
    <property type="entry name" value="ATP_synt_epsi"/>
    <property type="match status" value="1"/>
</dbReference>
<dbReference type="NCBIfam" id="NF009977">
    <property type="entry name" value="PRK13442.1"/>
    <property type="match status" value="1"/>
</dbReference>
<dbReference type="PANTHER" id="PTHR13822">
    <property type="entry name" value="ATP SYNTHASE DELTA/EPSILON CHAIN"/>
    <property type="match status" value="1"/>
</dbReference>
<dbReference type="PANTHER" id="PTHR13822:SF10">
    <property type="entry name" value="ATP SYNTHASE EPSILON CHAIN, CHLOROPLASTIC"/>
    <property type="match status" value="1"/>
</dbReference>
<dbReference type="Pfam" id="PF02823">
    <property type="entry name" value="ATP-synt_DE_N"/>
    <property type="match status" value="1"/>
</dbReference>
<dbReference type="SUPFAM" id="SSF51344">
    <property type="entry name" value="Epsilon subunit of F1F0-ATP synthase N-terminal domain"/>
    <property type="match status" value="1"/>
</dbReference>
<proteinExistence type="inferred from homology"/>
<organism>
    <name type="scientific">Mycobacterium sp. (strain JLS)</name>
    <dbReference type="NCBI Taxonomy" id="164757"/>
    <lineage>
        <taxon>Bacteria</taxon>
        <taxon>Bacillati</taxon>
        <taxon>Actinomycetota</taxon>
        <taxon>Actinomycetes</taxon>
        <taxon>Mycobacteriales</taxon>
        <taxon>Mycobacteriaceae</taxon>
        <taxon>Mycobacterium</taxon>
    </lineage>
</organism>
<accession>A3Q3B0</accession>
<gene>
    <name evidence="1" type="primary">atpC</name>
    <name type="ordered locus">Mjls_3861</name>
</gene>
<reference key="1">
    <citation type="submission" date="2007-02" db="EMBL/GenBank/DDBJ databases">
        <title>Complete sequence of Mycobacterium sp. JLS.</title>
        <authorList>
            <consortium name="US DOE Joint Genome Institute"/>
            <person name="Copeland A."/>
            <person name="Lucas S."/>
            <person name="Lapidus A."/>
            <person name="Barry K."/>
            <person name="Detter J.C."/>
            <person name="Glavina del Rio T."/>
            <person name="Hammon N."/>
            <person name="Israni S."/>
            <person name="Dalin E."/>
            <person name="Tice H."/>
            <person name="Pitluck S."/>
            <person name="Chain P."/>
            <person name="Malfatti S."/>
            <person name="Shin M."/>
            <person name="Vergez L."/>
            <person name="Schmutz J."/>
            <person name="Larimer F."/>
            <person name="Land M."/>
            <person name="Hauser L."/>
            <person name="Kyrpides N."/>
            <person name="Mikhailova N."/>
            <person name="Miller C.D."/>
            <person name="Anderson A.J."/>
            <person name="Sims R.C."/>
            <person name="Richardson P."/>
        </authorList>
    </citation>
    <scope>NUCLEOTIDE SEQUENCE [LARGE SCALE GENOMIC DNA]</scope>
    <source>
        <strain>JLS</strain>
    </source>
</reference>